<keyword id="KW-0050">Antiport</keyword>
<keyword id="KW-0997">Cell inner membrane</keyword>
<keyword id="KW-1003">Cell membrane</keyword>
<keyword id="KW-0406">Ion transport</keyword>
<keyword id="KW-0472">Membrane</keyword>
<keyword id="KW-0915">Sodium</keyword>
<keyword id="KW-0739">Sodium transport</keyword>
<keyword id="KW-0812">Transmembrane</keyword>
<keyword id="KW-1133">Transmembrane helix</keyword>
<keyword id="KW-0813">Transport</keyword>
<gene>
    <name evidence="1" type="primary">nhaB</name>
    <name type="ordered locus">SFV_1193</name>
</gene>
<accession>Q0T5L5</accession>
<proteinExistence type="inferred from homology"/>
<reference key="1">
    <citation type="journal article" date="2006" name="BMC Genomics">
        <title>Complete genome sequence of Shigella flexneri 5b and comparison with Shigella flexneri 2a.</title>
        <authorList>
            <person name="Nie H."/>
            <person name="Yang F."/>
            <person name="Zhang X."/>
            <person name="Yang J."/>
            <person name="Chen L."/>
            <person name="Wang J."/>
            <person name="Xiong Z."/>
            <person name="Peng J."/>
            <person name="Sun L."/>
            <person name="Dong J."/>
            <person name="Xue Y."/>
            <person name="Xu X."/>
            <person name="Chen S."/>
            <person name="Yao Z."/>
            <person name="Shen Y."/>
            <person name="Jin Q."/>
        </authorList>
    </citation>
    <scope>NUCLEOTIDE SEQUENCE [LARGE SCALE GENOMIC DNA]</scope>
    <source>
        <strain>8401</strain>
    </source>
</reference>
<comment type="function">
    <text evidence="1">Na(+)/H(+) antiporter that extrudes sodium in exchange for external protons.</text>
</comment>
<comment type="catalytic activity">
    <reaction evidence="1">
        <text>2 Na(+)(in) + 3 H(+)(out) = 2 Na(+)(out) + 3 H(+)(in)</text>
        <dbReference type="Rhea" id="RHEA:29247"/>
        <dbReference type="ChEBI" id="CHEBI:15378"/>
        <dbReference type="ChEBI" id="CHEBI:29101"/>
    </reaction>
    <physiologicalReaction direction="left-to-right" evidence="1">
        <dbReference type="Rhea" id="RHEA:29248"/>
    </physiologicalReaction>
</comment>
<comment type="subcellular location">
    <subcellularLocation>
        <location evidence="1">Cell inner membrane</location>
        <topology evidence="1">Multi-pass membrane protein</topology>
    </subcellularLocation>
</comment>
<comment type="similarity">
    <text evidence="1">Belongs to the NhaB Na(+)/H(+) (TC 2.A.34) antiporter family.</text>
</comment>
<protein>
    <recommendedName>
        <fullName evidence="1">Na(+)/H(+) antiporter NhaB</fullName>
    </recommendedName>
    <alternativeName>
        <fullName evidence="1">Sodium/proton antiporter NhaB</fullName>
    </alternativeName>
</protein>
<evidence type="ECO:0000255" key="1">
    <source>
        <dbReference type="HAMAP-Rule" id="MF_01599"/>
    </source>
</evidence>
<feature type="chain" id="PRO_0000333142" description="Na(+)/H(+) antiporter NhaB">
    <location>
        <begin position="1"/>
        <end position="513"/>
    </location>
</feature>
<feature type="transmembrane region" description="Helical" evidence="1">
    <location>
        <begin position="23"/>
        <end position="43"/>
    </location>
</feature>
<feature type="transmembrane region" description="Helical" evidence="1">
    <location>
        <begin position="52"/>
        <end position="72"/>
    </location>
</feature>
<feature type="transmembrane region" description="Helical" evidence="1">
    <location>
        <begin position="97"/>
        <end position="117"/>
    </location>
</feature>
<feature type="transmembrane region" description="Helical" evidence="1">
    <location>
        <begin position="120"/>
        <end position="140"/>
    </location>
</feature>
<feature type="transmembrane region" description="Helical" evidence="1">
    <location>
        <begin position="144"/>
        <end position="164"/>
    </location>
</feature>
<feature type="transmembrane region" description="Helical" evidence="1">
    <location>
        <begin position="202"/>
        <end position="222"/>
    </location>
</feature>
<feature type="transmembrane region" description="Helical" evidence="1">
    <location>
        <begin position="238"/>
        <end position="258"/>
    </location>
</feature>
<feature type="transmembrane region" description="Helical" evidence="1">
    <location>
        <begin position="303"/>
        <end position="323"/>
    </location>
</feature>
<feature type="transmembrane region" description="Helical" evidence="1">
    <location>
        <begin position="348"/>
        <end position="368"/>
    </location>
</feature>
<feature type="transmembrane region" description="Helical" evidence="1">
    <location>
        <begin position="391"/>
        <end position="411"/>
    </location>
</feature>
<feature type="transmembrane region" description="Helical" evidence="1">
    <location>
        <begin position="447"/>
        <end position="467"/>
    </location>
</feature>
<feature type="transmembrane region" description="Helical" evidence="1">
    <location>
        <begin position="475"/>
        <end position="495"/>
    </location>
</feature>
<sequence length="513" mass="56714">MEISWGRALWRNFLGQSPDWYKLALIIFLIVNPLIFLISPFVAGWLLVAEFIFTLAMALKCYPLLPGGLLAIEAVFIGMTSAEHVREEVAANLEVLLLLMFMVAGIYFMKQLLLFIFTRLLLSIRSKMLLSLSFCVAAAFLSAFLDALTVVAVVISVAVGFYGIYHRVASSRTEDTDLQDDSHIDKHYNVVLEQFRGFLRSLMMHAGVGTALGGVMTMVGEPQNLIIAKAAGWHFGDFFLRMSPVTVPVLICGLLTCLLVEKLRWFGYGETLPEKVREVLQQFDDQSRHQRTRQDKIRLIVQAIIGVWLVTALALHLAEVGLIGLSVIILATSLTGVTDEHAIGKAFTESLPFTALLTVFFSVVAVIIDQQLFSPIIQFVLQASEHAQLSLFYIFNGLLSSISDNVFVGTIYINEAKAAMESGAITLKQYELLAVAINTGTNLPSVATPNGQAAFLFLLTSALAPLIRLSYGRMVWMALPYTLVLTLVGLLCVEFTLAPVTEWFMQMGWIATL</sequence>
<organism>
    <name type="scientific">Shigella flexneri serotype 5b (strain 8401)</name>
    <dbReference type="NCBI Taxonomy" id="373384"/>
    <lineage>
        <taxon>Bacteria</taxon>
        <taxon>Pseudomonadati</taxon>
        <taxon>Pseudomonadota</taxon>
        <taxon>Gammaproteobacteria</taxon>
        <taxon>Enterobacterales</taxon>
        <taxon>Enterobacteriaceae</taxon>
        <taxon>Shigella</taxon>
    </lineage>
</organism>
<dbReference type="EMBL" id="CP000266">
    <property type="protein sequence ID" value="ABF03400.1"/>
    <property type="molecule type" value="Genomic_DNA"/>
</dbReference>
<dbReference type="RefSeq" id="WP_000406409.1">
    <property type="nucleotide sequence ID" value="NC_008258.1"/>
</dbReference>
<dbReference type="SMR" id="Q0T5L5"/>
<dbReference type="KEGG" id="sfv:SFV_1193"/>
<dbReference type="HOGENOM" id="CLU_041110_0_0_6"/>
<dbReference type="Proteomes" id="UP000000659">
    <property type="component" value="Chromosome"/>
</dbReference>
<dbReference type="GO" id="GO:0005886">
    <property type="term" value="C:plasma membrane"/>
    <property type="evidence" value="ECO:0007669"/>
    <property type="project" value="UniProtKB-SubCell"/>
</dbReference>
<dbReference type="GO" id="GO:0015385">
    <property type="term" value="F:sodium:proton antiporter activity"/>
    <property type="evidence" value="ECO:0007669"/>
    <property type="project" value="InterPro"/>
</dbReference>
<dbReference type="HAMAP" id="MF_01599">
    <property type="entry name" value="NhaB"/>
    <property type="match status" value="1"/>
</dbReference>
<dbReference type="InterPro" id="IPR004671">
    <property type="entry name" value="Na+/H+_antiporter_NhaB"/>
</dbReference>
<dbReference type="NCBIfam" id="TIGR00774">
    <property type="entry name" value="NhaB"/>
    <property type="match status" value="1"/>
</dbReference>
<dbReference type="NCBIfam" id="NF007093">
    <property type="entry name" value="PRK09547.1"/>
    <property type="match status" value="1"/>
</dbReference>
<dbReference type="PANTHER" id="PTHR43302:SF1">
    <property type="entry name" value="NA(+)_H(+) ANTIPORTER NHAB"/>
    <property type="match status" value="1"/>
</dbReference>
<dbReference type="PANTHER" id="PTHR43302">
    <property type="entry name" value="TRANSPORTER ARSB-RELATED"/>
    <property type="match status" value="1"/>
</dbReference>
<dbReference type="Pfam" id="PF06450">
    <property type="entry name" value="NhaB"/>
    <property type="match status" value="1"/>
</dbReference>
<name>NHAB_SHIF8</name>